<proteinExistence type="evidence at protein level"/>
<dbReference type="EC" id="3.5.2.3" evidence="1"/>
<dbReference type="EMBL" id="AE003853">
    <property type="protein sequence ID" value="AAF96822.1"/>
    <property type="status" value="ALT_INIT"/>
    <property type="molecule type" value="Genomic_DNA"/>
</dbReference>
<dbReference type="PIR" id="E82398">
    <property type="entry name" value="E82398"/>
</dbReference>
<dbReference type="RefSeq" id="NP_233310.1">
    <property type="nucleotide sequence ID" value="NC_002506.1"/>
</dbReference>
<dbReference type="RefSeq" id="WP_000210005.1">
    <property type="nucleotide sequence ID" value="NZ_LT906615.1"/>
</dbReference>
<dbReference type="PDB" id="5VGM">
    <property type="method" value="X-ray"/>
    <property type="resolution" value="1.95 A"/>
    <property type="chains" value="A/B=1-342"/>
</dbReference>
<dbReference type="PDBsum" id="5VGM"/>
<dbReference type="SMR" id="Q9KL24"/>
<dbReference type="STRING" id="243277.VC_A0925"/>
<dbReference type="MEROPS" id="M38.A02"/>
<dbReference type="DNASU" id="2612885"/>
<dbReference type="EnsemblBacteria" id="AAF96822">
    <property type="protein sequence ID" value="AAF96822"/>
    <property type="gene ID" value="VC_A0925"/>
</dbReference>
<dbReference type="KEGG" id="vch:VC_A0925"/>
<dbReference type="PATRIC" id="fig|243277.26.peg.3538"/>
<dbReference type="eggNOG" id="COG0418">
    <property type="taxonomic scope" value="Bacteria"/>
</dbReference>
<dbReference type="HOGENOM" id="CLU_041558_1_0_6"/>
<dbReference type="BRENDA" id="3.5.2.3">
    <property type="organism ID" value="15862"/>
</dbReference>
<dbReference type="UniPathway" id="UPA00070">
    <property type="reaction ID" value="UER00117"/>
</dbReference>
<dbReference type="Proteomes" id="UP000000584">
    <property type="component" value="Chromosome 2"/>
</dbReference>
<dbReference type="GO" id="GO:0005737">
    <property type="term" value="C:cytoplasm"/>
    <property type="evidence" value="ECO:0000318"/>
    <property type="project" value="GO_Central"/>
</dbReference>
<dbReference type="GO" id="GO:0005829">
    <property type="term" value="C:cytosol"/>
    <property type="evidence" value="ECO:0000318"/>
    <property type="project" value="GO_Central"/>
</dbReference>
<dbReference type="GO" id="GO:0004151">
    <property type="term" value="F:dihydroorotase activity"/>
    <property type="evidence" value="ECO:0000318"/>
    <property type="project" value="GO_Central"/>
</dbReference>
<dbReference type="GO" id="GO:0008270">
    <property type="term" value="F:zinc ion binding"/>
    <property type="evidence" value="ECO:0007669"/>
    <property type="project" value="UniProtKB-UniRule"/>
</dbReference>
<dbReference type="GO" id="GO:0006207">
    <property type="term" value="P:'de novo' pyrimidine nucleobase biosynthetic process"/>
    <property type="evidence" value="ECO:0000318"/>
    <property type="project" value="GO_Central"/>
</dbReference>
<dbReference type="GO" id="GO:0044205">
    <property type="term" value="P:'de novo' UMP biosynthetic process"/>
    <property type="evidence" value="ECO:0007669"/>
    <property type="project" value="UniProtKB-UniRule"/>
</dbReference>
<dbReference type="GO" id="GO:0006221">
    <property type="term" value="P:pyrimidine nucleotide biosynthetic process"/>
    <property type="evidence" value="ECO:0000318"/>
    <property type="project" value="GO_Central"/>
</dbReference>
<dbReference type="CDD" id="cd01294">
    <property type="entry name" value="DHOase"/>
    <property type="match status" value="1"/>
</dbReference>
<dbReference type="FunFam" id="3.20.20.140:FF:000006">
    <property type="entry name" value="Dihydroorotase"/>
    <property type="match status" value="1"/>
</dbReference>
<dbReference type="Gene3D" id="3.20.20.140">
    <property type="entry name" value="Metal-dependent hydrolases"/>
    <property type="match status" value="1"/>
</dbReference>
<dbReference type="HAMAP" id="MF_00219">
    <property type="entry name" value="PyrC_classII"/>
    <property type="match status" value="1"/>
</dbReference>
<dbReference type="InterPro" id="IPR006680">
    <property type="entry name" value="Amidohydro-rel"/>
</dbReference>
<dbReference type="InterPro" id="IPR004721">
    <property type="entry name" value="DHOdimr"/>
</dbReference>
<dbReference type="InterPro" id="IPR002195">
    <property type="entry name" value="Dihydroorotase_CS"/>
</dbReference>
<dbReference type="InterPro" id="IPR032466">
    <property type="entry name" value="Metal_Hydrolase"/>
</dbReference>
<dbReference type="NCBIfam" id="TIGR00856">
    <property type="entry name" value="pyrC_dimer"/>
    <property type="match status" value="1"/>
</dbReference>
<dbReference type="PANTHER" id="PTHR43137">
    <property type="entry name" value="DIHYDROOROTASE"/>
    <property type="match status" value="1"/>
</dbReference>
<dbReference type="PANTHER" id="PTHR43137:SF1">
    <property type="entry name" value="DIHYDROOROTASE"/>
    <property type="match status" value="1"/>
</dbReference>
<dbReference type="Pfam" id="PF01979">
    <property type="entry name" value="Amidohydro_1"/>
    <property type="match status" value="1"/>
</dbReference>
<dbReference type="PIRSF" id="PIRSF001237">
    <property type="entry name" value="DHOdimr"/>
    <property type="match status" value="1"/>
</dbReference>
<dbReference type="SUPFAM" id="SSF51556">
    <property type="entry name" value="Metallo-dependent hydrolases"/>
    <property type="match status" value="1"/>
</dbReference>
<dbReference type="PROSITE" id="PS00482">
    <property type="entry name" value="DIHYDROOROTASE_1"/>
    <property type="match status" value="1"/>
</dbReference>
<dbReference type="PROSITE" id="PS00483">
    <property type="entry name" value="DIHYDROOROTASE_2"/>
    <property type="match status" value="1"/>
</dbReference>
<name>PYRC_VIBCH</name>
<evidence type="ECO:0000255" key="1">
    <source>
        <dbReference type="HAMAP-Rule" id="MF_00219"/>
    </source>
</evidence>
<evidence type="ECO:0000305" key="2"/>
<evidence type="ECO:0007829" key="3">
    <source>
        <dbReference type="PDB" id="5VGM"/>
    </source>
</evidence>
<feature type="chain" id="PRO_0000147221" description="Dihydroorotase">
    <location>
        <begin position="1"/>
        <end position="342"/>
    </location>
</feature>
<feature type="active site" evidence="1">
    <location>
        <position position="246"/>
    </location>
</feature>
<feature type="binding site" evidence="1">
    <location>
        <position position="13"/>
    </location>
    <ligand>
        <name>Zn(2+)</name>
        <dbReference type="ChEBI" id="CHEBI:29105"/>
        <label>1</label>
    </ligand>
</feature>
<feature type="binding site" evidence="1">
    <location>
        <begin position="15"/>
        <end position="17"/>
    </location>
    <ligand>
        <name>substrate</name>
    </ligand>
</feature>
<feature type="binding site" evidence="1">
    <location>
        <position position="15"/>
    </location>
    <ligand>
        <name>Zn(2+)</name>
        <dbReference type="ChEBI" id="CHEBI:29105"/>
        <label>1</label>
    </ligand>
</feature>
<feature type="binding site" evidence="1">
    <location>
        <position position="41"/>
    </location>
    <ligand>
        <name>substrate</name>
    </ligand>
</feature>
<feature type="binding site" description="via carbamate group" evidence="1">
    <location>
        <position position="98"/>
    </location>
    <ligand>
        <name>Zn(2+)</name>
        <dbReference type="ChEBI" id="CHEBI:29105"/>
        <label>1</label>
    </ligand>
</feature>
<feature type="binding site" description="via carbamate group" evidence="1">
    <location>
        <position position="98"/>
    </location>
    <ligand>
        <name>Zn(2+)</name>
        <dbReference type="ChEBI" id="CHEBI:29105"/>
        <label>2</label>
    </ligand>
</feature>
<feature type="binding site" evidence="1">
    <location>
        <position position="135"/>
    </location>
    <ligand>
        <name>substrate</name>
    </ligand>
</feature>
<feature type="binding site" evidence="1">
    <location>
        <position position="135"/>
    </location>
    <ligand>
        <name>Zn(2+)</name>
        <dbReference type="ChEBI" id="CHEBI:29105"/>
        <label>2</label>
    </ligand>
</feature>
<feature type="binding site" evidence="1">
    <location>
        <position position="173"/>
    </location>
    <ligand>
        <name>Zn(2+)</name>
        <dbReference type="ChEBI" id="CHEBI:29105"/>
        <label>2</label>
    </ligand>
</feature>
<feature type="binding site" evidence="1">
    <location>
        <position position="218"/>
    </location>
    <ligand>
        <name>substrate</name>
    </ligand>
</feature>
<feature type="binding site" evidence="1">
    <location>
        <position position="246"/>
    </location>
    <ligand>
        <name>Zn(2+)</name>
        <dbReference type="ChEBI" id="CHEBI:29105"/>
        <label>1</label>
    </ligand>
</feature>
<feature type="binding site" evidence="1">
    <location>
        <position position="250"/>
    </location>
    <ligand>
        <name>substrate</name>
    </ligand>
</feature>
<feature type="binding site" evidence="1">
    <location>
        <position position="262"/>
    </location>
    <ligand>
        <name>substrate</name>
    </ligand>
</feature>
<feature type="modified residue" description="N6-carboxylysine" evidence="1">
    <location>
        <position position="98"/>
    </location>
</feature>
<feature type="strand" evidence="3">
    <location>
        <begin position="3"/>
        <end position="7"/>
    </location>
</feature>
<feature type="strand" evidence="3">
    <location>
        <begin position="11"/>
        <end position="14"/>
    </location>
</feature>
<feature type="helix" evidence="3">
    <location>
        <begin position="19"/>
        <end position="21"/>
    </location>
</feature>
<feature type="helix" evidence="3">
    <location>
        <begin position="22"/>
        <end position="29"/>
    </location>
</feature>
<feature type="turn" evidence="3">
    <location>
        <begin position="30"/>
        <end position="32"/>
    </location>
</feature>
<feature type="strand" evidence="3">
    <location>
        <begin position="34"/>
        <end position="38"/>
    </location>
</feature>
<feature type="strand" evidence="3">
    <location>
        <begin position="42"/>
        <end position="44"/>
    </location>
</feature>
<feature type="helix" evidence="3">
    <location>
        <begin position="49"/>
        <end position="61"/>
    </location>
</feature>
<feature type="strand" evidence="3">
    <location>
        <begin position="69"/>
        <end position="75"/>
    </location>
</feature>
<feature type="helix" evidence="3">
    <location>
        <begin position="82"/>
        <end position="90"/>
    </location>
</feature>
<feature type="strand" evidence="3">
    <location>
        <begin position="92"/>
        <end position="99"/>
    </location>
</feature>
<feature type="helix" evidence="3">
    <location>
        <begin position="115"/>
        <end position="118"/>
    </location>
</feature>
<feature type="helix" evidence="3">
    <location>
        <begin position="119"/>
        <end position="128"/>
    </location>
</feature>
<feature type="strand" evidence="3">
    <location>
        <begin position="131"/>
        <end position="134"/>
    </location>
</feature>
<feature type="helix" evidence="3">
    <location>
        <begin position="145"/>
        <end position="147"/>
    </location>
</feature>
<feature type="helix" evidence="3">
    <location>
        <begin position="148"/>
        <end position="155"/>
    </location>
</feature>
<feature type="helix" evidence="3">
    <location>
        <begin position="157"/>
        <end position="163"/>
    </location>
</feature>
<feature type="strand" evidence="3">
    <location>
        <begin position="169"/>
        <end position="171"/>
    </location>
</feature>
<feature type="helix" evidence="3">
    <location>
        <begin position="177"/>
        <end position="185"/>
    </location>
</feature>
<feature type="strand" evidence="3">
    <location>
        <begin position="190"/>
        <end position="194"/>
    </location>
</feature>
<feature type="helix" evidence="3">
    <location>
        <begin position="197"/>
        <end position="200"/>
    </location>
</feature>
<feature type="helix" evidence="3">
    <location>
        <begin position="203"/>
        <end position="207"/>
    </location>
</feature>
<feature type="helix" evidence="3">
    <location>
        <begin position="213"/>
        <end position="215"/>
    </location>
</feature>
<feature type="helix" evidence="3">
    <location>
        <begin position="224"/>
        <end position="236"/>
    </location>
</feature>
<feature type="strand" evidence="3">
    <location>
        <begin position="241"/>
        <end position="243"/>
    </location>
</feature>
<feature type="helix" evidence="3">
    <location>
        <begin position="252"/>
        <end position="255"/>
    </location>
</feature>
<feature type="strand" evidence="3">
    <location>
        <begin position="256"/>
        <end position="260"/>
    </location>
</feature>
<feature type="helix" evidence="3">
    <location>
        <begin position="270"/>
        <end position="280"/>
    </location>
</feature>
<feature type="helix" evidence="3">
    <location>
        <begin position="284"/>
        <end position="286"/>
    </location>
</feature>
<feature type="helix" evidence="3">
    <location>
        <begin position="287"/>
        <end position="292"/>
    </location>
</feature>
<feature type="helix" evidence="3">
    <location>
        <begin position="294"/>
        <end position="299"/>
    </location>
</feature>
<feature type="strand" evidence="3">
    <location>
        <begin position="305"/>
        <end position="316"/>
    </location>
</feature>
<feature type="strand" evidence="3">
    <location>
        <begin position="321"/>
        <end position="323"/>
    </location>
</feature>
<feature type="strand" evidence="3">
    <location>
        <begin position="326"/>
        <end position="328"/>
    </location>
</feature>
<feature type="turn" evidence="3">
    <location>
        <begin position="331"/>
        <end position="334"/>
    </location>
</feature>
<feature type="strand" evidence="3">
    <location>
        <begin position="335"/>
        <end position="342"/>
    </location>
</feature>
<keyword id="KW-0002">3D-structure</keyword>
<keyword id="KW-0378">Hydrolase</keyword>
<keyword id="KW-0479">Metal-binding</keyword>
<keyword id="KW-0665">Pyrimidine biosynthesis</keyword>
<keyword id="KW-1185">Reference proteome</keyword>
<keyword id="KW-0862">Zinc</keyword>
<accession>Q9KL24</accession>
<comment type="function">
    <text evidence="1">Catalyzes the reversible cyclization of carbamoyl aspartate to dihydroorotate.</text>
</comment>
<comment type="catalytic activity">
    <reaction evidence="1">
        <text>(S)-dihydroorotate + H2O = N-carbamoyl-L-aspartate + H(+)</text>
        <dbReference type="Rhea" id="RHEA:24296"/>
        <dbReference type="ChEBI" id="CHEBI:15377"/>
        <dbReference type="ChEBI" id="CHEBI:15378"/>
        <dbReference type="ChEBI" id="CHEBI:30864"/>
        <dbReference type="ChEBI" id="CHEBI:32814"/>
        <dbReference type="EC" id="3.5.2.3"/>
    </reaction>
</comment>
<comment type="cofactor">
    <cofactor evidence="1">
        <name>Zn(2+)</name>
        <dbReference type="ChEBI" id="CHEBI:29105"/>
    </cofactor>
    <text evidence="1">Binds 2 Zn(2+) ions per subunit.</text>
</comment>
<comment type="pathway">
    <text evidence="1">Pyrimidine metabolism; UMP biosynthesis via de novo pathway; (S)-dihydroorotate from bicarbonate: step 3/3.</text>
</comment>
<comment type="subunit">
    <text evidence="1">Homodimer.</text>
</comment>
<comment type="similarity">
    <text evidence="1">Belongs to the metallo-dependent hydrolases superfamily. DHOase family. Class II DHOase subfamily.</text>
</comment>
<comment type="sequence caution" evidence="2">
    <conflict type="erroneous initiation">
        <sequence resource="EMBL-CDS" id="AAF96822"/>
    </conflict>
</comment>
<gene>
    <name evidence="1" type="primary">pyrC</name>
    <name type="ordered locus">VC_A0925</name>
</gene>
<organism>
    <name type="scientific">Vibrio cholerae serotype O1 (strain ATCC 39315 / El Tor Inaba N16961)</name>
    <dbReference type="NCBI Taxonomy" id="243277"/>
    <lineage>
        <taxon>Bacteria</taxon>
        <taxon>Pseudomonadati</taxon>
        <taxon>Pseudomonadota</taxon>
        <taxon>Gammaproteobacteria</taxon>
        <taxon>Vibrionales</taxon>
        <taxon>Vibrionaceae</taxon>
        <taxon>Vibrio</taxon>
    </lineage>
</organism>
<sequence length="342" mass="37462">MTTLTITRPDDWHVHLRDGDVLADTVRDISRYNGRALIMPNTVPPVTTTEMALAYRERIMAAQPQAHFEPLMALYLTDNTSPEEIRKAKASGKVVAAKLYPAGATTNSDSGVTSAKNIYPVLQAMQEVGMLLLVHGEVTTHEVDIFDREKTFLDTVLAPIVNDFPQLKIVLEHITTADAVTFVQQAGDNVAATITAHHLLFNRNHMLVGGIRPHFYCLPILKRATHQHALVAAATSGSKKFFLGTDSAPHAKGRKEAACGCAGSYTAHAALELYAEVFEKEGKLENLEAFASFNGPDFYGLPRNQETVTLTKQAWPVAESMPFGSDIVVPIRAGENIEWTVK</sequence>
<reference key="1">
    <citation type="journal article" date="2000" name="Nature">
        <title>DNA sequence of both chromosomes of the cholera pathogen Vibrio cholerae.</title>
        <authorList>
            <person name="Heidelberg J.F."/>
            <person name="Eisen J.A."/>
            <person name="Nelson W.C."/>
            <person name="Clayton R.A."/>
            <person name="Gwinn M.L."/>
            <person name="Dodson R.J."/>
            <person name="Haft D.H."/>
            <person name="Hickey E.K."/>
            <person name="Peterson J.D."/>
            <person name="Umayam L.A."/>
            <person name="Gill S.R."/>
            <person name="Nelson K.E."/>
            <person name="Read T.D."/>
            <person name="Tettelin H."/>
            <person name="Richardson D.L."/>
            <person name="Ermolaeva M.D."/>
            <person name="Vamathevan J.J."/>
            <person name="Bass S."/>
            <person name="Qin H."/>
            <person name="Dragoi I."/>
            <person name="Sellers P."/>
            <person name="McDonald L.A."/>
            <person name="Utterback T.R."/>
            <person name="Fleischmann R.D."/>
            <person name="Nierman W.C."/>
            <person name="White O."/>
            <person name="Salzberg S.L."/>
            <person name="Smith H.O."/>
            <person name="Colwell R.R."/>
            <person name="Mekalanos J.J."/>
            <person name="Venter J.C."/>
            <person name="Fraser C.M."/>
        </authorList>
    </citation>
    <scope>NUCLEOTIDE SEQUENCE [LARGE SCALE GENOMIC DNA]</scope>
    <source>
        <strain>ATCC 39315 / El Tor Inaba N16961</strain>
    </source>
</reference>
<protein>
    <recommendedName>
        <fullName evidence="1">Dihydroorotase</fullName>
        <shortName evidence="1">DHOase</shortName>
        <ecNumber evidence="1">3.5.2.3</ecNumber>
    </recommendedName>
</protein>